<dbReference type="EC" id="1.13.12.-" evidence="3"/>
<dbReference type="EMBL" id="CP001053">
    <property type="protein sequence ID" value="ACD18527.1"/>
    <property type="molecule type" value="Genomic_DNA"/>
</dbReference>
<dbReference type="RefSeq" id="WP_012426043.1">
    <property type="nucleotide sequence ID" value="NC_010676.1"/>
</dbReference>
<dbReference type="SMR" id="B2TEK6"/>
<dbReference type="STRING" id="398527.Bphyt_4144"/>
<dbReference type="KEGG" id="bpy:Bphyt_4144"/>
<dbReference type="eggNOG" id="COG2070">
    <property type="taxonomic scope" value="Bacteria"/>
</dbReference>
<dbReference type="HOGENOM" id="CLU_038732_5_1_4"/>
<dbReference type="OrthoDB" id="9778912at2"/>
<dbReference type="Proteomes" id="UP000001739">
    <property type="component" value="Chromosome 2"/>
</dbReference>
<dbReference type="GO" id="GO:0018580">
    <property type="term" value="F:nitronate monooxygenase activity"/>
    <property type="evidence" value="ECO:0007669"/>
    <property type="project" value="InterPro"/>
</dbReference>
<dbReference type="GO" id="GO:0000166">
    <property type="term" value="F:nucleotide binding"/>
    <property type="evidence" value="ECO:0007669"/>
    <property type="project" value="UniProtKB-KW"/>
</dbReference>
<dbReference type="GO" id="GO:0009636">
    <property type="term" value="P:response to toxic substance"/>
    <property type="evidence" value="ECO:0007669"/>
    <property type="project" value="UniProtKB-KW"/>
</dbReference>
<dbReference type="CDD" id="cd04730">
    <property type="entry name" value="NPD_like"/>
    <property type="match status" value="1"/>
</dbReference>
<dbReference type="FunFam" id="3.20.20.70:FF:000154">
    <property type="entry name" value="Probable nitronate monooxygenase"/>
    <property type="match status" value="1"/>
</dbReference>
<dbReference type="Gene3D" id="3.20.20.70">
    <property type="entry name" value="Aldolase class I"/>
    <property type="match status" value="1"/>
</dbReference>
<dbReference type="InterPro" id="IPR013785">
    <property type="entry name" value="Aldolase_TIM"/>
</dbReference>
<dbReference type="InterPro" id="IPR004136">
    <property type="entry name" value="NMO"/>
</dbReference>
<dbReference type="PANTHER" id="PTHR42747">
    <property type="entry name" value="NITRONATE MONOOXYGENASE-RELATED"/>
    <property type="match status" value="1"/>
</dbReference>
<dbReference type="PANTHER" id="PTHR42747:SF3">
    <property type="entry name" value="NITRONATE MONOOXYGENASE-RELATED"/>
    <property type="match status" value="1"/>
</dbReference>
<dbReference type="Pfam" id="PF03060">
    <property type="entry name" value="NMO"/>
    <property type="match status" value="1"/>
</dbReference>
<dbReference type="SUPFAM" id="SSF51412">
    <property type="entry name" value="Inosine monophosphate dehydrogenase (IMPDH)"/>
    <property type="match status" value="1"/>
</dbReference>
<feature type="chain" id="PRO_0000445422" description="Nitronate monooxygenase">
    <location>
        <begin position="1"/>
        <end position="366"/>
    </location>
</feature>
<feature type="binding site" evidence="1">
    <location>
        <position position="74"/>
    </location>
    <ligand>
        <name>FMN</name>
        <dbReference type="ChEBI" id="CHEBI:58210"/>
    </ligand>
</feature>
<feature type="binding site" evidence="1">
    <location>
        <position position="181"/>
    </location>
    <ligand>
        <name>FMN</name>
        <dbReference type="ChEBI" id="CHEBI:58210"/>
    </ligand>
</feature>
<feature type="binding site" evidence="1">
    <location>
        <position position="186"/>
    </location>
    <ligand>
        <name>FMN</name>
        <dbReference type="ChEBI" id="CHEBI:58210"/>
    </ligand>
</feature>
<feature type="binding site" evidence="1">
    <location>
        <position position="223"/>
    </location>
    <ligand>
        <name>FMN</name>
        <dbReference type="ChEBI" id="CHEBI:58210"/>
    </ligand>
</feature>
<feature type="binding site" evidence="1">
    <location>
        <begin position="242"/>
        <end position="245"/>
    </location>
    <ligand>
        <name>FMN</name>
        <dbReference type="ChEBI" id="CHEBI:58210"/>
    </ligand>
</feature>
<protein>
    <recommendedName>
        <fullName evidence="6">Nitronate monooxygenase</fullName>
        <shortName evidence="6">NMO</shortName>
        <ecNumber evidence="3">1.13.12.-</ecNumber>
    </recommendedName>
    <alternativeName>
        <fullName evidence="6">Propionate 3-nitronate monooxygenase</fullName>
        <shortName evidence="6">P3N monooxygenase</shortName>
    </alternativeName>
</protein>
<reference key="1">
    <citation type="journal article" date="2011" name="J. Bacteriol.">
        <title>Complete genome sequence of the plant growth-promoting endophyte Burkholderia phytofirmans strain PsJN.</title>
        <authorList>
            <person name="Weilharter A."/>
            <person name="Mitter B."/>
            <person name="Shin M.V."/>
            <person name="Chain P.S."/>
            <person name="Nowak J."/>
            <person name="Sessitsch A."/>
        </authorList>
    </citation>
    <scope>NUCLEOTIDE SEQUENCE [LARGE SCALE GENOMIC DNA]</scope>
    <source>
        <strain>DSM 17436 / LMG 22146 / PsJN</strain>
    </source>
</reference>
<reference key="2">
    <citation type="journal article" date="2010" name="Appl. Environ. Microbiol.">
        <title>Growth of bacteria on 3-nitropropionic acid as a sole source of carbon, nitrogen, and energy.</title>
        <authorList>
            <person name="Nishino S.F."/>
            <person name="Shin K.A."/>
            <person name="Payne R.B."/>
            <person name="Spain J.C."/>
        </authorList>
    </citation>
    <scope>FUNCTION</scope>
    <source>
        <strain>DSM 17436 / LMG 22146 / PsJN</strain>
    </source>
</reference>
<reference key="3">
    <citation type="journal article" date="2014" name="J. Biol. Chem.">
        <title>The combined structural and kinetic characterization of a bacterial nitronate monooxygenase from Pseudomonas aeruginosa PAO1 establishes NMO class I and II.</title>
        <authorList>
            <person name="Salvi F."/>
            <person name="Agniswamy J."/>
            <person name="Yuan H."/>
            <person name="Vercammen K."/>
            <person name="Pelicaen R."/>
            <person name="Cornelis P."/>
            <person name="Spain J.C."/>
            <person name="Weber I.T."/>
            <person name="Gadda G."/>
        </authorList>
    </citation>
    <scope>FUNCTION</scope>
    <scope>CATALYTIC ACTIVITY</scope>
    <scope>SUBSTRATE SPECIFICITY</scope>
    <source>
        <strain>DSM 17436 / LMG 22146 / PsJN</strain>
    </source>
</reference>
<keyword id="KW-0216">Detoxification</keyword>
<keyword id="KW-0285">Flavoprotein</keyword>
<keyword id="KW-0288">FMN</keyword>
<keyword id="KW-0503">Monooxygenase</keyword>
<keyword id="KW-0547">Nucleotide-binding</keyword>
<keyword id="KW-0560">Oxidoreductase</keyword>
<accession>B2TEK6</accession>
<name>NMO_PARPJ</name>
<organism>
    <name type="scientific">Paraburkholderia phytofirmans (strain DSM 17436 / LMG 22146 / PsJN)</name>
    <name type="common">Burkholderia phytofirmans</name>
    <dbReference type="NCBI Taxonomy" id="398527"/>
    <lineage>
        <taxon>Bacteria</taxon>
        <taxon>Pseudomonadati</taxon>
        <taxon>Pseudomonadota</taxon>
        <taxon>Betaproteobacteria</taxon>
        <taxon>Burkholderiales</taxon>
        <taxon>Burkholderiaceae</taxon>
        <taxon>Paraburkholderia</taxon>
    </lineage>
</organism>
<proteinExistence type="evidence at protein level"/>
<evidence type="ECO:0000250" key="1">
    <source>
        <dbReference type="UniProtKB" id="Q9HWH9"/>
    </source>
</evidence>
<evidence type="ECO:0000269" key="2">
    <source>
    </source>
</evidence>
<evidence type="ECO:0000269" key="3">
    <source>
    </source>
</evidence>
<evidence type="ECO:0000305" key="4"/>
<evidence type="ECO:0000305" key="5">
    <source>
    </source>
</evidence>
<evidence type="ECO:0000305" key="6">
    <source>
    </source>
</evidence>
<evidence type="ECO:0000312" key="7">
    <source>
        <dbReference type="EMBL" id="ACD18527.1"/>
    </source>
</evidence>
<comment type="function">
    <text evidence="2 3">Nitronate monooxygenase that uses molecular oxygen to catalyze the oxidative denitrification of alkyl nitronates. Acts on propionate 3-nitronate (P3N), the presumed physiological substrate (PubMed:25002579). Is likely involved in the degradation of P3N, that allows B.phytofirmans PsJN to grow on 3-nitropropionate/P3N as the sole source of nitrogen and carbon (PubMed:20382807). Also probably functions in the detoxification of P3N, a metabolic poison produced by plants and fungi as a defense mechanism (PubMed:25002579). Cannot oxidize nitroalkanes such as 3-nitropropionate, nitroethane, or 1-nitropropane (PubMed:25002579).</text>
</comment>
<comment type="catalytic activity">
    <reaction evidence="3 5">
        <text>3 propionate 3-nitronate + 3 O2 + H2O = 3 3-oxopropanoate + 2 nitrate + nitrite + H2O2 + 3 H(+)</text>
        <dbReference type="Rhea" id="RHEA:57332"/>
        <dbReference type="ChEBI" id="CHEBI:15377"/>
        <dbReference type="ChEBI" id="CHEBI:15378"/>
        <dbReference type="ChEBI" id="CHEBI:15379"/>
        <dbReference type="ChEBI" id="CHEBI:16240"/>
        <dbReference type="ChEBI" id="CHEBI:16301"/>
        <dbReference type="ChEBI" id="CHEBI:17632"/>
        <dbReference type="ChEBI" id="CHEBI:33190"/>
        <dbReference type="ChEBI" id="CHEBI:136067"/>
    </reaction>
</comment>
<comment type="cofactor">
    <cofactor evidence="1">
        <name>FMN</name>
        <dbReference type="ChEBI" id="CHEBI:58210"/>
    </cofactor>
    <text evidence="1">Binds 1 FMN per subunit.</text>
</comment>
<comment type="miscellaneous">
    <text evidence="4">At physiological pH, 3-nitropropionate (3-NPA) exists in equilibrium with its conjugate base, propionate-3-nitronate (P3N).</text>
</comment>
<comment type="miscellaneous">
    <text evidence="4">P3N is a potent irreversible inhibitor of the key enzyme succinate dehydrogenase in the Krebs cycle and electron transport chain. P3N has been shown to be a toxic metabolite to bacteria, plants, fungi, mammals or any organism that uses succinate dehydrogenase.</text>
</comment>
<comment type="similarity">
    <text evidence="6">Belongs to the nitronate monooxygenase family. NMO class I subfamily.</text>
</comment>
<gene>
    <name evidence="7" type="ordered locus">Bphyt_4144</name>
</gene>
<sequence length="366" mass="38062">MTDQTGKRALLPLLGIDKPIIQAPMAGVSTPALAAAVCNAGGLGSLGVGAMNADGARKVIRETRALTDKPFNINVFCHRPAQADAAVEQQWLSWLAPHFEKYGATPPAKLSDIYTSFLADPAMLAVFLEEKPAIVSFHFGLPSADVIAELKKAGIRLLASATNLQEAAQVEAAGVDAIVAQGIEAGGHRGVFDPDAFDDRLGTFALTRLLAKECRLPVIAAGGIMDGAGIAAALALGAQAAQLGTAFVACTETSIDEGYRRALLGEAARRTTFTAAISGRLARSMANSFTALGADPRSPEPATYPIAYDAGKALNAAAKAKGEFGYGAHWAGQAAALARSLPAAELVAQLERELKQSIEQLRQFAN</sequence>